<feature type="chain" id="PRO_0000355119" description="Glyoxalase 1">
    <location>
        <begin position="1"/>
        <end position="281"/>
    </location>
</feature>
<feature type="domain" description="VOC 1" evidence="4">
    <location>
        <begin position="4"/>
        <end position="127"/>
    </location>
</feature>
<feature type="domain" description="VOC 2" evidence="4">
    <location>
        <begin position="132"/>
        <end position="251"/>
    </location>
</feature>
<keyword id="KW-1185">Reference proteome</keyword>
<keyword id="KW-0677">Repeat</keyword>
<name>GLOD4_CAEBR</name>
<protein>
    <recommendedName>
        <fullName>Glyoxalase 1</fullName>
    </recommendedName>
    <alternativeName>
        <fullName evidence="2">Glyoxalase domain-containing protein 4</fullName>
    </alternativeName>
</protein>
<comment type="function">
    <text evidence="1">Thought to act as a glyoxalase. May remove methylglyoxal from mitochondrial proteins. Has roles in reducing oxidative stress and increasing lifespan (By similarity).</text>
</comment>
<comment type="similarity">
    <text evidence="3">Belongs to the glyoxalase I family.</text>
</comment>
<accession>A8XX92</accession>
<organism>
    <name type="scientific">Caenorhabditis briggsae</name>
    <dbReference type="NCBI Taxonomy" id="6238"/>
    <lineage>
        <taxon>Eukaryota</taxon>
        <taxon>Metazoa</taxon>
        <taxon>Ecdysozoa</taxon>
        <taxon>Nematoda</taxon>
        <taxon>Chromadorea</taxon>
        <taxon>Rhabditida</taxon>
        <taxon>Rhabditina</taxon>
        <taxon>Rhabditomorpha</taxon>
        <taxon>Rhabditoidea</taxon>
        <taxon>Rhabditidae</taxon>
        <taxon>Peloderinae</taxon>
        <taxon>Caenorhabditis</taxon>
    </lineage>
</organism>
<proteinExistence type="inferred from homology"/>
<reference evidence="5" key="1">
    <citation type="journal article" date="2003" name="PLoS Biol.">
        <title>The genome sequence of Caenorhabditis briggsae: a platform for comparative genomics.</title>
        <authorList>
            <person name="Stein L.D."/>
            <person name="Bao Z."/>
            <person name="Blasiar D."/>
            <person name="Blumenthal T."/>
            <person name="Brent M.R."/>
            <person name="Chen N."/>
            <person name="Chinwalla A."/>
            <person name="Clarke L."/>
            <person name="Clee C."/>
            <person name="Coghlan A."/>
            <person name="Coulson A."/>
            <person name="D'Eustachio P."/>
            <person name="Fitch D.H.A."/>
            <person name="Fulton L.A."/>
            <person name="Fulton R.E."/>
            <person name="Griffiths-Jones S."/>
            <person name="Harris T.W."/>
            <person name="Hillier L.W."/>
            <person name="Kamath R."/>
            <person name="Kuwabara P.E."/>
            <person name="Mardis E.R."/>
            <person name="Marra M.A."/>
            <person name="Miner T.L."/>
            <person name="Minx P."/>
            <person name="Mullikin J.C."/>
            <person name="Plumb R.W."/>
            <person name="Rogers J."/>
            <person name="Schein J.E."/>
            <person name="Sohrmann M."/>
            <person name="Spieth J."/>
            <person name="Stajich J.E."/>
            <person name="Wei C."/>
            <person name="Willey D."/>
            <person name="Wilson R.K."/>
            <person name="Durbin R.M."/>
            <person name="Waterston R.H."/>
        </authorList>
    </citation>
    <scope>NUCLEOTIDE SEQUENCE [LARGE SCALE GENOMIC DNA]</scope>
    <source>
        <strain evidence="5">AF16</strain>
    </source>
</reference>
<gene>
    <name evidence="5" type="primary">glod-4</name>
    <name type="ORF">CBG20174</name>
</gene>
<dbReference type="EMBL" id="HE601013">
    <property type="protein sequence ID" value="CAP37261.1"/>
    <property type="molecule type" value="Genomic_DNA"/>
</dbReference>
<dbReference type="SMR" id="A8XX92"/>
<dbReference type="FunCoup" id="A8XX92">
    <property type="interactions" value="1435"/>
</dbReference>
<dbReference type="STRING" id="6238.A8XX92"/>
<dbReference type="EnsemblMetazoa" id="CBG20174.1">
    <property type="protein sequence ID" value="CBG20174.1"/>
    <property type="gene ID" value="WBGene00039226"/>
</dbReference>
<dbReference type="KEGG" id="cbr:CBG_20174"/>
<dbReference type="CTD" id="8584542"/>
<dbReference type="WormBase" id="CBG20174">
    <property type="protein sequence ID" value="CBP11431"/>
    <property type="gene ID" value="WBGene00039226"/>
    <property type="gene designation" value="Cbr-glod-4"/>
</dbReference>
<dbReference type="eggNOG" id="KOG2943">
    <property type="taxonomic scope" value="Eukaryota"/>
</dbReference>
<dbReference type="HOGENOM" id="CLU_044479_0_0_1"/>
<dbReference type="InParanoid" id="A8XX92"/>
<dbReference type="OMA" id="CDAECNG"/>
<dbReference type="Proteomes" id="UP000008549">
    <property type="component" value="Unassembled WGS sequence"/>
</dbReference>
<dbReference type="GO" id="GO:0008340">
    <property type="term" value="P:determination of adult lifespan"/>
    <property type="evidence" value="ECO:0000250"/>
    <property type="project" value="UniProtKB"/>
</dbReference>
<dbReference type="GO" id="GO:0009438">
    <property type="term" value="P:methylglyoxal metabolic process"/>
    <property type="evidence" value="ECO:0000250"/>
    <property type="project" value="UniProtKB"/>
</dbReference>
<dbReference type="CDD" id="cd16357">
    <property type="entry name" value="GLOD4_C"/>
    <property type="match status" value="1"/>
</dbReference>
<dbReference type="FunFam" id="3.10.180.10:FF:000014">
    <property type="entry name" value="glyoxalase domain-containing protein 4"/>
    <property type="match status" value="1"/>
</dbReference>
<dbReference type="Gene3D" id="3.10.180.10">
    <property type="entry name" value="2,3-Dihydroxybiphenyl 1,2-Dioxygenase, domain 1"/>
    <property type="match status" value="2"/>
</dbReference>
<dbReference type="InterPro" id="IPR043193">
    <property type="entry name" value="GLOD4"/>
</dbReference>
<dbReference type="InterPro" id="IPR043194">
    <property type="entry name" value="GLOD4_C"/>
</dbReference>
<dbReference type="InterPro" id="IPR029068">
    <property type="entry name" value="Glyas_Bleomycin-R_OHBP_Dase"/>
</dbReference>
<dbReference type="InterPro" id="IPR004360">
    <property type="entry name" value="Glyas_Fos-R_dOase_dom"/>
</dbReference>
<dbReference type="InterPro" id="IPR037523">
    <property type="entry name" value="VOC"/>
</dbReference>
<dbReference type="PANTHER" id="PTHR46466">
    <property type="entry name" value="GLYOXALASE DOMAIN-CONTAINING PROTEIN 4"/>
    <property type="match status" value="1"/>
</dbReference>
<dbReference type="PANTHER" id="PTHR46466:SF1">
    <property type="entry name" value="GLYOXALASE DOMAIN-CONTAINING PROTEIN 4"/>
    <property type="match status" value="1"/>
</dbReference>
<dbReference type="Pfam" id="PF21701">
    <property type="entry name" value="GLOD4_C"/>
    <property type="match status" value="1"/>
</dbReference>
<dbReference type="Pfam" id="PF00903">
    <property type="entry name" value="Glyoxalase"/>
    <property type="match status" value="1"/>
</dbReference>
<dbReference type="SUPFAM" id="SSF54593">
    <property type="entry name" value="Glyoxalase/Bleomycin resistance protein/Dihydroxybiphenyl dioxygenase"/>
    <property type="match status" value="2"/>
</dbReference>
<dbReference type="PROSITE" id="PS51819">
    <property type="entry name" value="VOC"/>
    <property type="match status" value="2"/>
</dbReference>
<sequence length="281" mass="32087">MTARALHYVFKVANRAKTIDFYTKILEMKVLRHEEFDKGCEASCNGPYDERWSKTMIGYGSEDEHFVLELTYNYPIHKYELGNDYRAIVIDSDQLFDKISRIDHRKSGCGRLAVKDPDGHEFKIGKADHAPKVLRVQLNVGDLEKSKKYWNELLGMGIVEEKKTRVRLSFGEGQCELEIVQSGEKIDRKTGFGRIAFSLPGEKLQPLQDKIKSANGTIINELLTLKTPGKADVQVVILADPDAHEICFVGDEGFRDLSKIDDAAEKELREQIQKDDSEKWY</sequence>
<evidence type="ECO:0000250" key="1"/>
<evidence type="ECO:0000250" key="2">
    <source>
        <dbReference type="UniProtKB" id="Q09253"/>
    </source>
</evidence>
<evidence type="ECO:0000255" key="3"/>
<evidence type="ECO:0000255" key="4">
    <source>
        <dbReference type="PROSITE-ProRule" id="PRU01163"/>
    </source>
</evidence>
<evidence type="ECO:0000312" key="5">
    <source>
        <dbReference type="EMBL" id="CAP37261.1"/>
    </source>
</evidence>